<protein>
    <recommendedName>
        <fullName>Cytochrome P450 2C23</fullName>
        <ecNumber evidence="6 7 9">1.14.14.-</ecNumber>
    </recommendedName>
    <alternativeName>
        <fullName>Arachidonic acid epoxygenase</fullName>
    </alternativeName>
    <alternativeName>
        <fullName>CYPIIC23</fullName>
    </alternativeName>
</protein>
<keyword id="KW-0007">Acetylation</keyword>
<keyword id="KW-0256">Endoplasmic reticulum</keyword>
<keyword id="KW-0276">Fatty acid metabolism</keyword>
<keyword id="KW-0349">Heme</keyword>
<keyword id="KW-0408">Iron</keyword>
<keyword id="KW-0443">Lipid metabolism</keyword>
<keyword id="KW-0472">Membrane</keyword>
<keyword id="KW-0479">Metal-binding</keyword>
<keyword id="KW-0492">Microsome</keyword>
<keyword id="KW-0503">Monooxygenase</keyword>
<keyword id="KW-0560">Oxidoreductase</keyword>
<keyword id="KW-0597">Phosphoprotein</keyword>
<keyword id="KW-1185">Reference proteome</keyword>
<accession>P24470</accession>
<accession>Q63914</accession>
<accession>Q64534</accession>
<name>CP2CN_RAT</name>
<evidence type="ECO:0000250" key="1">
    <source>
        <dbReference type="UniProtKB" id="E9Q5K4"/>
    </source>
</evidence>
<evidence type="ECO:0000250" key="2">
    <source>
        <dbReference type="UniProtKB" id="P00176"/>
    </source>
</evidence>
<evidence type="ECO:0000250" key="3">
    <source>
        <dbReference type="UniProtKB" id="P33261"/>
    </source>
</evidence>
<evidence type="ECO:0000250" key="4">
    <source>
        <dbReference type="UniProtKB" id="Q64458"/>
    </source>
</evidence>
<evidence type="ECO:0000269" key="5">
    <source>
    </source>
</evidence>
<evidence type="ECO:0000269" key="6">
    <source>
    </source>
</evidence>
<evidence type="ECO:0000269" key="7">
    <source>
    </source>
</evidence>
<evidence type="ECO:0000269" key="8">
    <source>
    </source>
</evidence>
<evidence type="ECO:0000269" key="9">
    <source>
    </source>
</evidence>
<evidence type="ECO:0000269" key="10">
    <source>
    </source>
</evidence>
<evidence type="ECO:0000303" key="11">
    <source>
    </source>
</evidence>
<evidence type="ECO:0000305" key="12"/>
<evidence type="ECO:0000305" key="13">
    <source>
    </source>
</evidence>
<evidence type="ECO:0000305" key="14">
    <source>
    </source>
</evidence>
<evidence type="ECO:0000305" key="15">
    <source>
    </source>
</evidence>
<evidence type="ECO:0000305" key="16">
    <source>
    </source>
</evidence>
<evidence type="ECO:0000312" key="17">
    <source>
        <dbReference type="RGD" id="620370"/>
    </source>
</evidence>
<comment type="function">
    <text evidence="1 5 6 7 9">A cytochrome P450 monooxygenase involved in polyunsaturated fatty acids (PUFAs) metabolism and signaling. Catalyzes preferentially the epoxidation of double bonds of PUFAs. Converts arachidonic acid (ARA, C20:4(n-6)) primarily to stereospecific products 8R,9S-, 11R,12S-, and 14S,15R-EET (PubMed:10491410, PubMed:14742258, PubMed:8246128). Plays a major role in the formation of EETs and hydroxy-EETs (HEETs) in kidney (PubMed:10491410, PubMed:14742258). Via EETs may inhibit the epithelial sodium channels (ENaCs) in nephron segments, preventing excessive sodium absorption during high dietary salt intake (By similarity). Participates in the formation of anti-inflammatory hydroxyepoxyeicosatrienoic acids (HEETs) by converting 20-hydroxyeicosatetraenoic acid (20-HETE) to 20,8,9-HEET, an activator of PPARA (PubMed:14742258). Metabolizes eicosapentaenoic acid (EPA, C20:5(n-3)) to epoxyeicosatetraenoic acid (EETeTr) regioisomers, 8,9-, 11,12-, 14,15-, and 17,18-EETeTr, preferentially producing 17R,18S enantiomer (PubMed:15766564). Mechanistically, uses molecular oxygen inserting one oxygen atom into a substrate, and reducing the second into a water molecule, with two electrons provided by NADPH via cytochrome P450 reductase (NADPH--hemoprotein reductase) (PubMed:8246128).</text>
</comment>
<comment type="catalytic activity">
    <reaction evidence="5">
        <text>(5Z,8Z,11Z,14Z)-eicosatetraenoate + reduced [NADPH--hemoprotein reductase] + O2 = (8R,9S)-epoxy-(5Z,11Z,14Z)-eicosatrienoate + oxidized [NADPH--hemoprotein reductase] + H2O + H(+)</text>
        <dbReference type="Rhea" id="RHEA:49884"/>
        <dbReference type="Rhea" id="RHEA-COMP:11964"/>
        <dbReference type="Rhea" id="RHEA-COMP:11965"/>
        <dbReference type="ChEBI" id="CHEBI:15377"/>
        <dbReference type="ChEBI" id="CHEBI:15378"/>
        <dbReference type="ChEBI" id="CHEBI:15379"/>
        <dbReference type="ChEBI" id="CHEBI:32395"/>
        <dbReference type="ChEBI" id="CHEBI:57618"/>
        <dbReference type="ChEBI" id="CHEBI:58210"/>
        <dbReference type="ChEBI" id="CHEBI:131975"/>
    </reaction>
    <physiologicalReaction direction="left-to-right" evidence="13">
        <dbReference type="Rhea" id="RHEA:49885"/>
    </physiologicalReaction>
</comment>
<comment type="catalytic activity">
    <reaction evidence="5">
        <text>(5Z,8Z,11Z,14Z)-eicosatetraenoate + reduced [NADPH--hemoprotein reductase] + O2 = (11R,12S)-epoxy-(5Z,8Z,14Z)-eicosatrienoate + oxidized [NADPH--hemoprotein reductase] + H2O + H(+)</text>
        <dbReference type="Rhea" id="RHEA:49880"/>
        <dbReference type="Rhea" id="RHEA-COMP:11964"/>
        <dbReference type="Rhea" id="RHEA-COMP:11965"/>
        <dbReference type="ChEBI" id="CHEBI:15377"/>
        <dbReference type="ChEBI" id="CHEBI:15378"/>
        <dbReference type="ChEBI" id="CHEBI:15379"/>
        <dbReference type="ChEBI" id="CHEBI:32395"/>
        <dbReference type="ChEBI" id="CHEBI:57618"/>
        <dbReference type="ChEBI" id="CHEBI:58210"/>
        <dbReference type="ChEBI" id="CHEBI:131970"/>
    </reaction>
    <physiologicalReaction direction="left-to-right" evidence="13">
        <dbReference type="Rhea" id="RHEA:49881"/>
    </physiologicalReaction>
</comment>
<comment type="catalytic activity">
    <reaction evidence="5">
        <text>(5Z,8Z,11Z,14Z)-eicosatetraenoate + reduced [NADPH--hemoprotein reductase] + O2 = (11S,12R)-epoxy-(5Z,8Z,14Z)-eicosatrienoate + oxidized [NADPH--hemoprotein reductase] + H2O + H(+)</text>
        <dbReference type="Rhea" id="RHEA:49876"/>
        <dbReference type="Rhea" id="RHEA-COMP:11964"/>
        <dbReference type="Rhea" id="RHEA-COMP:11965"/>
        <dbReference type="ChEBI" id="CHEBI:15377"/>
        <dbReference type="ChEBI" id="CHEBI:15378"/>
        <dbReference type="ChEBI" id="CHEBI:15379"/>
        <dbReference type="ChEBI" id="CHEBI:32395"/>
        <dbReference type="ChEBI" id="CHEBI:57618"/>
        <dbReference type="ChEBI" id="CHEBI:58210"/>
        <dbReference type="ChEBI" id="CHEBI:131969"/>
    </reaction>
    <physiologicalReaction direction="left-to-right" evidence="13">
        <dbReference type="Rhea" id="RHEA:49877"/>
    </physiologicalReaction>
</comment>
<comment type="catalytic activity">
    <reaction evidence="5">
        <text>(5Z,8Z,11Z,14Z)-eicosatetraenoate + reduced [NADPH--hemoprotein reductase] + O2 = (14R,15S)-epoxy-(5Z,8Z,11Z)-eicosatrienoate + oxidized [NADPH--hemoprotein reductase] + H2O + H(+)</text>
        <dbReference type="Rhea" id="RHEA:49860"/>
        <dbReference type="Rhea" id="RHEA-COMP:11964"/>
        <dbReference type="Rhea" id="RHEA-COMP:11965"/>
        <dbReference type="ChEBI" id="CHEBI:15377"/>
        <dbReference type="ChEBI" id="CHEBI:15378"/>
        <dbReference type="ChEBI" id="CHEBI:15379"/>
        <dbReference type="ChEBI" id="CHEBI:32395"/>
        <dbReference type="ChEBI" id="CHEBI:57618"/>
        <dbReference type="ChEBI" id="CHEBI:58210"/>
        <dbReference type="ChEBI" id="CHEBI:131965"/>
    </reaction>
    <physiologicalReaction direction="left-to-right" evidence="13">
        <dbReference type="Rhea" id="RHEA:49861"/>
    </physiologicalReaction>
</comment>
<comment type="catalytic activity">
    <reaction evidence="5">
        <text>(5Z,8Z,11Z,14Z)-eicosatetraenoate + reduced [NADPH--hemoprotein reductase] + O2 = (14S,15R)-epoxy-(5Z,8Z,11Z)-eicosatrienoate + oxidized [NADPH--hemoprotein reductase] + H2O + H(+)</text>
        <dbReference type="Rhea" id="RHEA:49856"/>
        <dbReference type="Rhea" id="RHEA-COMP:11964"/>
        <dbReference type="Rhea" id="RHEA-COMP:11965"/>
        <dbReference type="ChEBI" id="CHEBI:15377"/>
        <dbReference type="ChEBI" id="CHEBI:15378"/>
        <dbReference type="ChEBI" id="CHEBI:15379"/>
        <dbReference type="ChEBI" id="CHEBI:32395"/>
        <dbReference type="ChEBI" id="CHEBI:57618"/>
        <dbReference type="ChEBI" id="CHEBI:58210"/>
        <dbReference type="ChEBI" id="CHEBI:131964"/>
    </reaction>
    <physiologicalReaction direction="left-to-right" evidence="13">
        <dbReference type="Rhea" id="RHEA:49857"/>
    </physiologicalReaction>
</comment>
<comment type="catalytic activity">
    <reaction evidence="7">
        <text>(5Z,8Z,11Z,14Z,17Z)-eicosapentaenoate + reduced [NADPH--hemoprotein reductase] + O2 = 8,9-epoxy-(5Z,11Z,14Z,17Z)-eicosatetraenoate + oxidized [NADPH--hemoprotein reductase] + H2O + H(+)</text>
        <dbReference type="Rhea" id="RHEA:52168"/>
        <dbReference type="Rhea" id="RHEA-COMP:11964"/>
        <dbReference type="Rhea" id="RHEA-COMP:11965"/>
        <dbReference type="ChEBI" id="CHEBI:15377"/>
        <dbReference type="ChEBI" id="CHEBI:15378"/>
        <dbReference type="ChEBI" id="CHEBI:15379"/>
        <dbReference type="ChEBI" id="CHEBI:57618"/>
        <dbReference type="ChEBI" id="CHEBI:58210"/>
        <dbReference type="ChEBI" id="CHEBI:58562"/>
        <dbReference type="ChEBI" id="CHEBI:136439"/>
    </reaction>
    <physiologicalReaction direction="left-to-right" evidence="15">
        <dbReference type="Rhea" id="RHEA:52169"/>
    </physiologicalReaction>
</comment>
<comment type="catalytic activity">
    <reaction evidence="7">
        <text>(5Z,8Z,11Z,14Z,17Z)-eicosapentaenoate + reduced [NADPH--hemoprotein reductase] + O2 = 11,12-epoxy-(5Z,8Z,14Z,17Z)-eicosatetraenoate + oxidized [NADPH--hemoprotein reductase] + H2O + H(+)</text>
        <dbReference type="Rhea" id="RHEA:52172"/>
        <dbReference type="Rhea" id="RHEA-COMP:11964"/>
        <dbReference type="Rhea" id="RHEA-COMP:11965"/>
        <dbReference type="ChEBI" id="CHEBI:15377"/>
        <dbReference type="ChEBI" id="CHEBI:15378"/>
        <dbReference type="ChEBI" id="CHEBI:15379"/>
        <dbReference type="ChEBI" id="CHEBI:57618"/>
        <dbReference type="ChEBI" id="CHEBI:58210"/>
        <dbReference type="ChEBI" id="CHEBI:58562"/>
        <dbReference type="ChEBI" id="CHEBI:136441"/>
    </reaction>
    <physiologicalReaction direction="left-to-right" evidence="15">
        <dbReference type="Rhea" id="RHEA:52173"/>
    </physiologicalReaction>
</comment>
<comment type="catalytic activity">
    <reaction evidence="7">
        <text>(5Z,8Z,11Z,14Z,17Z)-eicosapentaenoate + reduced [NADPH--hemoprotein reductase] + O2 = 14,15-epoxy-(5Z,8Z,11Z,17Z)-eicosatetraenoate + oxidized [NADPH--hemoprotein reductase] + H2O + H(+)</text>
        <dbReference type="Rhea" id="RHEA:52176"/>
        <dbReference type="Rhea" id="RHEA-COMP:11964"/>
        <dbReference type="Rhea" id="RHEA-COMP:11965"/>
        <dbReference type="ChEBI" id="CHEBI:15377"/>
        <dbReference type="ChEBI" id="CHEBI:15378"/>
        <dbReference type="ChEBI" id="CHEBI:15379"/>
        <dbReference type="ChEBI" id="CHEBI:57618"/>
        <dbReference type="ChEBI" id="CHEBI:58210"/>
        <dbReference type="ChEBI" id="CHEBI:58562"/>
        <dbReference type="ChEBI" id="CHEBI:136443"/>
    </reaction>
    <physiologicalReaction direction="left-to-right" evidence="15">
        <dbReference type="Rhea" id="RHEA:52177"/>
    </physiologicalReaction>
</comment>
<comment type="catalytic activity">
    <reaction evidence="7">
        <text>(5Z,8Z,11Z,14Z,17Z)-eicosapentaenoate + reduced [NADPH--hemoprotein reductase] + O2 = (17R,18S)-epoxy-(5Z,8Z,11Z,14Z)-eicosatetraenoate + oxidized [NADPH--hemoprotein reductase] + H2O + H(+)</text>
        <dbReference type="Rhea" id="RHEA:39779"/>
        <dbReference type="Rhea" id="RHEA-COMP:11964"/>
        <dbReference type="Rhea" id="RHEA-COMP:11965"/>
        <dbReference type="ChEBI" id="CHEBI:15377"/>
        <dbReference type="ChEBI" id="CHEBI:15378"/>
        <dbReference type="ChEBI" id="CHEBI:15379"/>
        <dbReference type="ChEBI" id="CHEBI:57618"/>
        <dbReference type="ChEBI" id="CHEBI:58210"/>
        <dbReference type="ChEBI" id="CHEBI:58562"/>
        <dbReference type="ChEBI" id="CHEBI:76634"/>
    </reaction>
    <physiologicalReaction direction="left-to-right" evidence="15">
        <dbReference type="Rhea" id="RHEA:39780"/>
    </physiologicalReaction>
</comment>
<comment type="catalytic activity">
    <reaction evidence="7">
        <text>(5Z,8Z,11Z,14Z,17Z)-eicosapentaenoate + reduced [NADPH--hemoprotein reductase] + O2 = (17S,18R)-epoxy-(5Z,8Z,11Z,14Z)-eicosatetraenoate + oxidized [NADPH--hemoprotein reductase] + H2O + H(+)</text>
        <dbReference type="Rhea" id="RHEA:39783"/>
        <dbReference type="Rhea" id="RHEA-COMP:11964"/>
        <dbReference type="Rhea" id="RHEA-COMP:11965"/>
        <dbReference type="ChEBI" id="CHEBI:15377"/>
        <dbReference type="ChEBI" id="CHEBI:15378"/>
        <dbReference type="ChEBI" id="CHEBI:15379"/>
        <dbReference type="ChEBI" id="CHEBI:57618"/>
        <dbReference type="ChEBI" id="CHEBI:58210"/>
        <dbReference type="ChEBI" id="CHEBI:58562"/>
        <dbReference type="ChEBI" id="CHEBI:76635"/>
    </reaction>
    <physiologicalReaction direction="left-to-right" evidence="15">
        <dbReference type="Rhea" id="RHEA:39784"/>
    </physiologicalReaction>
</comment>
<comment type="catalytic activity">
    <reaction evidence="6">
        <text>20-hydroxy-(5Z,8Z,11Z,14Z)-eicosatetraenoate + reduced [NADPH--hemoprotein reductase] + O2 = 20-hydroxy-8,9-epoxy-(5Z,11Z,14Z)-eicosatrienoate + oxidized [NADPH--hemoprotein reductase] + H2O + H(+)</text>
        <dbReference type="Rhea" id="RHEA:64980"/>
        <dbReference type="Rhea" id="RHEA-COMP:11964"/>
        <dbReference type="Rhea" id="RHEA-COMP:11965"/>
        <dbReference type="ChEBI" id="CHEBI:15377"/>
        <dbReference type="ChEBI" id="CHEBI:15378"/>
        <dbReference type="ChEBI" id="CHEBI:15379"/>
        <dbReference type="ChEBI" id="CHEBI:57618"/>
        <dbReference type="ChEBI" id="CHEBI:58210"/>
        <dbReference type="ChEBI" id="CHEBI:76624"/>
        <dbReference type="ChEBI" id="CHEBI:137474"/>
    </reaction>
    <physiologicalReaction direction="left-to-right" evidence="14">
        <dbReference type="Rhea" id="RHEA:64981"/>
    </physiologicalReaction>
</comment>
<comment type="cofactor">
    <cofactor evidence="3">
        <name>heme</name>
        <dbReference type="ChEBI" id="CHEBI:30413"/>
    </cofactor>
</comment>
<comment type="biophysicochemical properties">
    <kinetics>
        <KM evidence="7">8.1 uM for (5Z,8Z,11Z,14Z)-eicosatetraenoate (total epoxygenase activity)</KM>
        <KM evidence="7">14.7 uM for (5Z,8Z,11Z,14Z,17Z)-eicosapentaenoate (total epoxygenase activity)</KM>
        <Vmax evidence="7">14.1 nmol/min/nmol enzyme toward (5Z,8Z,11Z,14Z)-eicosatetraenoate (total epoxygenase activity)</Vmax>
        <Vmax evidence="7">22.0 nmol/min/nmol enzyme toward (5Z,8Z,11Z,14Z,17Z)-eicosapentaenoate (total epoxygenase activity)</Vmax>
    </kinetics>
</comment>
<comment type="pathway">
    <text evidence="5 16">Lipid metabolism; arachidonate metabolism.</text>
</comment>
<comment type="subcellular location">
    <subcellularLocation>
        <location evidence="6">Endoplasmic reticulum membrane</location>
    </subcellularLocation>
    <subcellularLocation>
        <location evidence="6">Microsome membrane</location>
    </subcellularLocation>
</comment>
<comment type="tissue specificity">
    <text evidence="6 8 10">Expressed in kidney and liver. Expressed in cortical tubules of kidney (at protein level).</text>
</comment>
<comment type="induction">
    <text evidence="6">Constitutively expressed. Up-regulated by fenofibrate.</text>
</comment>
<comment type="similarity">
    <text evidence="12">Belongs to the cytochrome P450 family.</text>
</comment>
<reference key="1">
    <citation type="journal article" date="1990" name="Nucleic Acids Res.">
        <title>cDNA and deduced amino acid sequence of a novel cytochrome P-450 from female rat liver mRNA with high homology to P-450 IIC family.</title>
        <authorList>
            <person name="Cook E.A."/>
            <person name="Groenewegen W.A."/>
            <person name="Gloger I.S."/>
            <person name="Piggott J.R."/>
            <person name="Suckling K.E."/>
            <person name="Wolf C.R."/>
        </authorList>
    </citation>
    <scope>NUCLEOTIDE SEQUENCE [MRNA]</scope>
    <scope>TISSUE SPECIFICITY</scope>
    <source>
        <strain>Wistar</strain>
        <tissue>Liver</tissue>
    </source>
</reference>
<reference key="2">
    <citation type="journal article" date="1993" name="J. Biol. Chem.">
        <title>Molecular cloning, expression, and enzymatic characterization of the rat kidney cytochrome P-450 arachidonic acid epoxygenase.</title>
        <authorList>
            <person name="Karara A."/>
            <person name="Makita K."/>
            <person name="Jacobson H.R."/>
            <person name="Falk J.R."/>
            <person name="Guengerich P.F."/>
            <person name="Dubois R.N."/>
            <person name="Capdevila J.H."/>
        </authorList>
    </citation>
    <scope>NUCLEOTIDE SEQUENCE [MRNA]</scope>
    <scope>TISSUE SPECIFICITY</scope>
    <source>
        <strain>Sprague-Dawley</strain>
        <tissue>Kidney</tissue>
    </source>
</reference>
<reference key="3">
    <citation type="journal article" date="1993" name="J. Pharmacol. Exp. Ther.">
        <title>Identification of CYP2C23 expressed in rat kidney as an arachidonic acid epoxygenase.</title>
        <authorList>
            <person name="Imaoka S."/>
            <person name="Wedlund P.J."/>
            <person name="Ogawa H."/>
            <person name="Kimura S."/>
            <person name="Gonzalez F.J."/>
            <person name="Kim H.Y."/>
        </authorList>
    </citation>
    <scope>NUCLEOTIDE SEQUENCE [MRNA] OF 1-86</scope>
    <scope>FUNCTION</scope>
    <scope>PATHWAY</scope>
    <source>
        <tissue>Kidney</tissue>
    </source>
</reference>
<reference key="4">
    <citation type="journal article" date="1999" name="J. Clin. Invest.">
        <title>The kidney cytochrome P-450 2C23 arachidonic acid epoxygenase is upregulated during dietary salt loading.</title>
        <authorList>
            <person name="Holla V.R."/>
            <person name="Makita K."/>
            <person name="Zaphiropoulos P.G."/>
            <person name="Capdevila J.H."/>
        </authorList>
    </citation>
    <scope>FUNCTION</scope>
    <scope>CATALYTIC ACTIVITY</scope>
    <scope>PATHWAY</scope>
</reference>
<reference key="5">
    <citation type="journal article" date="2004" name="Am. J. Pathol.">
        <title>A peroxisome proliferator-activated receptor-alpha activator induces renal CYP2C23 activity and protects from angiotensin II-induced renal injury.</title>
        <authorList>
            <person name="Muller D.N."/>
            <person name="Theuer J."/>
            <person name="Shagdarsuren E."/>
            <person name="Kaergel E."/>
            <person name="Honeck H."/>
            <person name="Park J.K."/>
            <person name="Markovic M."/>
            <person name="Barbosa-Sicard E."/>
            <person name="Dechend R."/>
            <person name="Wellner M."/>
            <person name="Kirsch T."/>
            <person name="Fiebeler A."/>
            <person name="Rothe M."/>
            <person name="Haller H."/>
            <person name="Luft F.C."/>
            <person name="Schunck W.H."/>
        </authorList>
    </citation>
    <scope>FUNCTION</scope>
    <scope>CATALYTIC ACTIVITY</scope>
    <scope>SUBCELLULAR LOCATION</scope>
    <scope>TISSUE SPECIFICITY</scope>
    <scope>INDUCTION BY FENOFIBRATE</scope>
</reference>
<reference key="6">
    <citation type="journal article" date="2005" name="Biochem. Biophys. Res. Commun.">
        <title>Eicosapentaenoic acid metabolism by cytochrome P450 enzymes of the CYP2C subfamily.</title>
        <authorList>
            <person name="Barbosa-Sicard E."/>
            <person name="Markovic M."/>
            <person name="Honeck H."/>
            <person name="Christ B."/>
            <person name="Muller D.N."/>
            <person name="Schunck W.H."/>
        </authorList>
    </citation>
    <scope>FUNCTION</scope>
    <scope>CATALYTIC ACTIVITY</scope>
    <scope>BIOPHYSICOCHEMICAL PROPERTIES</scope>
</reference>
<dbReference type="EC" id="1.14.14.-" evidence="6 7 9"/>
<dbReference type="EMBL" id="X55446">
    <property type="protein sequence ID" value="CAA39087.1"/>
    <property type="molecule type" value="mRNA"/>
</dbReference>
<dbReference type="EMBL" id="U04733">
    <property type="protein sequence ID" value="AAA03716.1"/>
    <property type="molecule type" value="mRNA"/>
</dbReference>
<dbReference type="EMBL" id="S67064">
    <property type="protein sequence ID" value="AAB29022.1"/>
    <property type="molecule type" value="mRNA"/>
</dbReference>
<dbReference type="PIR" id="A46588">
    <property type="entry name" value="A46588"/>
</dbReference>
<dbReference type="PIR" id="S13101">
    <property type="entry name" value="S13101"/>
</dbReference>
<dbReference type="SMR" id="P24470"/>
<dbReference type="FunCoup" id="P24470">
    <property type="interactions" value="90"/>
</dbReference>
<dbReference type="IntAct" id="P24470">
    <property type="interactions" value="2"/>
</dbReference>
<dbReference type="STRING" id="10116.ENSRNOP00000017840"/>
<dbReference type="BindingDB" id="P24470"/>
<dbReference type="ChEMBL" id="CHEMBL2772"/>
<dbReference type="SwissLipids" id="SLP:000001688"/>
<dbReference type="GlyGen" id="P24470">
    <property type="glycosylation" value="1 site"/>
</dbReference>
<dbReference type="iPTMnet" id="P24470"/>
<dbReference type="PhosphoSitePlus" id="P24470"/>
<dbReference type="PaxDb" id="10116-ENSRNOP00000017840"/>
<dbReference type="UCSC" id="RGD:620370">
    <property type="organism name" value="rat"/>
</dbReference>
<dbReference type="AGR" id="RGD:620370"/>
<dbReference type="RGD" id="620370">
    <property type="gene designation" value="Cyp2c23"/>
</dbReference>
<dbReference type="eggNOG" id="KOG0156">
    <property type="taxonomic scope" value="Eukaryota"/>
</dbReference>
<dbReference type="InParanoid" id="P24470"/>
<dbReference type="OrthoDB" id="2789670at2759"/>
<dbReference type="PhylomeDB" id="P24470"/>
<dbReference type="UniPathway" id="UPA00383"/>
<dbReference type="PRO" id="PR:P24470"/>
<dbReference type="Proteomes" id="UP000002494">
    <property type="component" value="Unplaced"/>
</dbReference>
<dbReference type="GO" id="GO:0005737">
    <property type="term" value="C:cytoplasm"/>
    <property type="evidence" value="ECO:0000318"/>
    <property type="project" value="GO_Central"/>
</dbReference>
<dbReference type="GO" id="GO:0005789">
    <property type="term" value="C:endoplasmic reticulum membrane"/>
    <property type="evidence" value="ECO:0000314"/>
    <property type="project" value="UniProtKB"/>
</dbReference>
<dbReference type="GO" id="GO:0043231">
    <property type="term" value="C:intracellular membrane-bounded organelle"/>
    <property type="evidence" value="ECO:0000318"/>
    <property type="project" value="GO_Central"/>
</dbReference>
<dbReference type="GO" id="GO:0008405">
    <property type="term" value="F:arachidonate 11,12-epoxygenase activity"/>
    <property type="evidence" value="ECO:0000314"/>
    <property type="project" value="UniProtKB"/>
</dbReference>
<dbReference type="GO" id="GO:0008404">
    <property type="term" value="F:arachidonate 14,15-epoxygenase activity"/>
    <property type="evidence" value="ECO:0000314"/>
    <property type="project" value="UniProtKB"/>
</dbReference>
<dbReference type="GO" id="GO:0008392">
    <property type="term" value="F:arachidonate epoxygenase activity"/>
    <property type="evidence" value="ECO:0000314"/>
    <property type="project" value="UniProtKB"/>
</dbReference>
<dbReference type="GO" id="GO:0020037">
    <property type="term" value="F:heme binding"/>
    <property type="evidence" value="ECO:0000318"/>
    <property type="project" value="GO_Central"/>
</dbReference>
<dbReference type="GO" id="GO:0005506">
    <property type="term" value="F:iron ion binding"/>
    <property type="evidence" value="ECO:0007669"/>
    <property type="project" value="InterPro"/>
</dbReference>
<dbReference type="GO" id="GO:0004497">
    <property type="term" value="F:monooxygenase activity"/>
    <property type="evidence" value="ECO:0000314"/>
    <property type="project" value="UniProtKB"/>
</dbReference>
<dbReference type="GO" id="GO:0016712">
    <property type="term" value="F:oxidoreductase activity, acting on paired donors, with incorporation or reduction of molecular oxygen, reduced flavin or flavoprotein as one donor, and incorporation of one atom of oxygen"/>
    <property type="evidence" value="ECO:0000318"/>
    <property type="project" value="GO_Central"/>
</dbReference>
<dbReference type="GO" id="GO:0019369">
    <property type="term" value="P:arachidonate metabolic process"/>
    <property type="evidence" value="ECO:0000303"/>
    <property type="project" value="RGD"/>
</dbReference>
<dbReference type="GO" id="GO:0019373">
    <property type="term" value="P:epoxygenase P450 pathway"/>
    <property type="evidence" value="ECO:0000314"/>
    <property type="project" value="UniProtKB"/>
</dbReference>
<dbReference type="GO" id="GO:0046456">
    <property type="term" value="P:icosanoid biosynthetic process"/>
    <property type="evidence" value="ECO:0000314"/>
    <property type="project" value="UniProtKB"/>
</dbReference>
<dbReference type="GO" id="GO:0006082">
    <property type="term" value="P:organic acid metabolic process"/>
    <property type="evidence" value="ECO:0000318"/>
    <property type="project" value="GO_Central"/>
</dbReference>
<dbReference type="GO" id="GO:0033574">
    <property type="term" value="P:response to testosterone"/>
    <property type="evidence" value="ECO:0000270"/>
    <property type="project" value="RGD"/>
</dbReference>
<dbReference type="GO" id="GO:0006805">
    <property type="term" value="P:xenobiotic metabolic process"/>
    <property type="evidence" value="ECO:0000318"/>
    <property type="project" value="GO_Central"/>
</dbReference>
<dbReference type="CDD" id="cd20665">
    <property type="entry name" value="CYP2C-like"/>
    <property type="match status" value="1"/>
</dbReference>
<dbReference type="FunFam" id="1.10.630.10:FF:000001">
    <property type="entry name" value="Cytochrome P450, family 2"/>
    <property type="match status" value="1"/>
</dbReference>
<dbReference type="Gene3D" id="1.10.630.10">
    <property type="entry name" value="Cytochrome P450"/>
    <property type="match status" value="1"/>
</dbReference>
<dbReference type="InterPro" id="IPR001128">
    <property type="entry name" value="Cyt_P450"/>
</dbReference>
<dbReference type="InterPro" id="IPR017972">
    <property type="entry name" value="Cyt_P450_CS"/>
</dbReference>
<dbReference type="InterPro" id="IPR002401">
    <property type="entry name" value="Cyt_P450_E_grp-I"/>
</dbReference>
<dbReference type="InterPro" id="IPR036396">
    <property type="entry name" value="Cyt_P450_sf"/>
</dbReference>
<dbReference type="InterPro" id="IPR050182">
    <property type="entry name" value="Cytochrome_P450_fam2"/>
</dbReference>
<dbReference type="PANTHER" id="PTHR24300:SF346">
    <property type="entry name" value="CYTOCHROME P450 2C44"/>
    <property type="match status" value="1"/>
</dbReference>
<dbReference type="PANTHER" id="PTHR24300">
    <property type="entry name" value="CYTOCHROME P450 508A4-RELATED"/>
    <property type="match status" value="1"/>
</dbReference>
<dbReference type="Pfam" id="PF00067">
    <property type="entry name" value="p450"/>
    <property type="match status" value="1"/>
</dbReference>
<dbReference type="PRINTS" id="PR00463">
    <property type="entry name" value="EP450I"/>
</dbReference>
<dbReference type="PRINTS" id="PR00385">
    <property type="entry name" value="P450"/>
</dbReference>
<dbReference type="SUPFAM" id="SSF48264">
    <property type="entry name" value="Cytochrome P450"/>
    <property type="match status" value="1"/>
</dbReference>
<dbReference type="PROSITE" id="PS00086">
    <property type="entry name" value="CYTOCHROME_P450"/>
    <property type="match status" value="1"/>
</dbReference>
<organism>
    <name type="scientific">Rattus norvegicus</name>
    <name type="common">Rat</name>
    <dbReference type="NCBI Taxonomy" id="10116"/>
    <lineage>
        <taxon>Eukaryota</taxon>
        <taxon>Metazoa</taxon>
        <taxon>Chordata</taxon>
        <taxon>Craniata</taxon>
        <taxon>Vertebrata</taxon>
        <taxon>Euteleostomi</taxon>
        <taxon>Mammalia</taxon>
        <taxon>Eutheria</taxon>
        <taxon>Euarchontoglires</taxon>
        <taxon>Glires</taxon>
        <taxon>Rodentia</taxon>
        <taxon>Myomorpha</taxon>
        <taxon>Muroidea</taxon>
        <taxon>Muridae</taxon>
        <taxon>Murinae</taxon>
        <taxon>Rattus</taxon>
    </lineage>
</organism>
<sequence>MELLGFTTLALVVSVTCLSLLSVWTKLRTRGRLPPGPTPLPIIGNLLQLNLKDIPASLSKLAKEYGPVYTLYFGTSPTVVLHGYDVVKEALLQQGDEFLGRGPLPIIEDTHKGYGLIFSNGERWKVMRRFSLMTLRNFGMGKRSLEERVQEEARCLVEELQKTKAQPFDPTFILACAPCNVICSILFNDRFQYNDKTFLNLMDLLNKNFQQVNSVWCQMYNLWPTIIKYLPGKHIEFAKRIDDVKNFILEKVKEHQKSLDPANPRDYIDCFLSKIEEEKDNLKSEFHLENLAVCGSNLFTAGTETTSTTLRFGLLLLMKYPEVQAKVHEELDRVIGRHQPPSMKDKMKLPYTDAVLHEIQRYITLLPSSLPHAVVQDTKFRDYVIPKGTTVLPMLSSVMLDQKEFANPEKFDPGHFLDKNGCFKKTDYFVPFSLGKRACVGESLARMELFLFFTTLLQKFSLKTLVEPKDLDIKPITTGIINLPPPYKLCLVPR</sequence>
<proteinExistence type="evidence at protein level"/>
<feature type="chain" id="PRO_0000051711" description="Cytochrome P450 2C23">
    <location>
        <begin position="1"/>
        <end position="494"/>
    </location>
</feature>
<feature type="binding site" description="axial binding residue" evidence="3">
    <location>
        <position position="439"/>
    </location>
    <ligand>
        <name>heme</name>
        <dbReference type="ChEBI" id="CHEBI:30413"/>
    </ligand>
    <ligandPart>
        <name>Fe</name>
        <dbReference type="ChEBI" id="CHEBI:18248"/>
    </ligandPart>
</feature>
<feature type="modified residue" description="Phosphoserine" evidence="2">
    <location>
        <position position="131"/>
    </location>
</feature>
<feature type="modified residue" description="N6-acetyllysine" evidence="4">
    <location>
        <position position="253"/>
    </location>
</feature>
<feature type="modified residue" description="N6-acetyllysine" evidence="4">
    <location>
        <position position="379"/>
    </location>
</feature>
<feature type="sequence conflict" description="In Ref. 1; CAA39087." evidence="12" ref="1">
    <original>TPLPIIGNLLQLNLKDI</original>
    <variation>HPPSHYWESTATEPQGH</variation>
    <location>
        <begin position="38"/>
        <end position="54"/>
    </location>
</feature>
<feature type="sequence conflict" description="In Ref. 1; CAA39087." evidence="12" ref="1">
    <original>R</original>
    <variation>W</variation>
    <location>
        <position position="154"/>
    </location>
</feature>
<feature type="sequence conflict" description="In Ref. 1; CAA39087." evidence="12" ref="1">
    <original>LP</original>
    <variation>VG</variation>
    <location>
        <begin position="366"/>
        <end position="367"/>
    </location>
</feature>
<gene>
    <name evidence="11 17" type="primary">Cyp2c23</name>
    <name type="synonym">Cyp2c-23</name>
</gene>